<keyword id="KW-0067">ATP-binding</keyword>
<keyword id="KW-0143">Chaperone</keyword>
<keyword id="KW-0963">Cytoplasm</keyword>
<keyword id="KW-0413">Isomerase</keyword>
<keyword id="KW-0547">Nucleotide-binding</keyword>
<feature type="chain" id="PRO_0000063289" description="Chaperonin GroEL">
    <location>
        <begin position="1"/>
        <end position="547"/>
    </location>
</feature>
<feature type="binding site" evidence="1">
    <location>
        <begin position="30"/>
        <end position="33"/>
    </location>
    <ligand>
        <name>ATP</name>
        <dbReference type="ChEBI" id="CHEBI:30616"/>
    </ligand>
</feature>
<feature type="binding site" evidence="1">
    <location>
        <position position="51"/>
    </location>
    <ligand>
        <name>ATP</name>
        <dbReference type="ChEBI" id="CHEBI:30616"/>
    </ligand>
</feature>
<feature type="binding site" evidence="1">
    <location>
        <begin position="87"/>
        <end position="91"/>
    </location>
    <ligand>
        <name>ATP</name>
        <dbReference type="ChEBI" id="CHEBI:30616"/>
    </ligand>
</feature>
<feature type="binding site" evidence="1">
    <location>
        <position position="415"/>
    </location>
    <ligand>
        <name>ATP</name>
        <dbReference type="ChEBI" id="CHEBI:30616"/>
    </ligand>
</feature>
<feature type="binding site" evidence="1">
    <location>
        <begin position="479"/>
        <end position="481"/>
    </location>
    <ligand>
        <name>ATP</name>
        <dbReference type="ChEBI" id="CHEBI:30616"/>
    </ligand>
</feature>
<feature type="binding site" evidence="1">
    <location>
        <position position="495"/>
    </location>
    <ligand>
        <name>ATP</name>
        <dbReference type="ChEBI" id="CHEBI:30616"/>
    </ligand>
</feature>
<gene>
    <name evidence="1" type="primary">groEL</name>
    <name type="synonym">cpn60</name>
    <name evidence="1" type="synonym">groL</name>
    <name type="synonym">mopA</name>
    <name type="ordered locus">BB0962</name>
</gene>
<sequence length="547" mass="57483">MAAKQVLFADEARVRIVRGVNVLANAVKTTLGPKGRNVVLERSFGAPTVTKDGVSVAKEIELKDKFENIGAQLVKDVASKTSDNAGDGTTTATVLAQAVVQEGLKYVAAGFNPIDLKRGIDKAVAAAVEELKKLSKPVTTSKEIAQVGSISANSDASIGQIIADAMDKVGKEGVITVEDGKSLENELDVVEGMQFDRGYLSPYFINSPEKQVAALDDPYVLIYDKKVSNIRDLLPVLEQVAKSSRPLLIIAEDVEGEALATLVVNNIRGILKTTAVKAPGFGDRRKAMLEDIAILTGGTVISEETGMSLEKATLQDLGQAKRIEVAKENTTIIDGAGDGKSIEARVKQIRAQIEEATSDYDREKLQERVAKLAGGVAVIRVGAATEVEMKEKKARVEDALHATRAAVEEGVVPGGGVALLRAKQAITGLKGDTADQNAGIKLILRAVEEPLRTIVTNAGDEASVVVNTVLNGKGNYGYNAATGEYGDLVEQGVLDPTKVTRTALQNAASVASLLLTAEAAVVELMEDKPAAAPAMPGGMGGMGGMDF</sequence>
<organism>
    <name type="scientific">Bordetella bronchiseptica (strain ATCC BAA-588 / NCTC 13252 / RB50)</name>
    <name type="common">Alcaligenes bronchisepticus</name>
    <dbReference type="NCBI Taxonomy" id="257310"/>
    <lineage>
        <taxon>Bacteria</taxon>
        <taxon>Pseudomonadati</taxon>
        <taxon>Pseudomonadota</taxon>
        <taxon>Betaproteobacteria</taxon>
        <taxon>Burkholderiales</taxon>
        <taxon>Alcaligenaceae</taxon>
        <taxon>Bordetella</taxon>
    </lineage>
</organism>
<evidence type="ECO:0000255" key="1">
    <source>
        <dbReference type="HAMAP-Rule" id="MF_00600"/>
    </source>
</evidence>
<proteinExistence type="inferred from homology"/>
<reference key="1">
    <citation type="journal article" date="2003" name="Nat. Genet.">
        <title>Comparative analysis of the genome sequences of Bordetella pertussis, Bordetella parapertussis and Bordetella bronchiseptica.</title>
        <authorList>
            <person name="Parkhill J."/>
            <person name="Sebaihia M."/>
            <person name="Preston A."/>
            <person name="Murphy L.D."/>
            <person name="Thomson N.R."/>
            <person name="Harris D.E."/>
            <person name="Holden M.T.G."/>
            <person name="Churcher C.M."/>
            <person name="Bentley S.D."/>
            <person name="Mungall K.L."/>
            <person name="Cerdeno-Tarraga A.-M."/>
            <person name="Temple L."/>
            <person name="James K.D."/>
            <person name="Harris B."/>
            <person name="Quail M.A."/>
            <person name="Achtman M."/>
            <person name="Atkin R."/>
            <person name="Baker S."/>
            <person name="Basham D."/>
            <person name="Bason N."/>
            <person name="Cherevach I."/>
            <person name="Chillingworth T."/>
            <person name="Collins M."/>
            <person name="Cronin A."/>
            <person name="Davis P."/>
            <person name="Doggett J."/>
            <person name="Feltwell T."/>
            <person name="Goble A."/>
            <person name="Hamlin N."/>
            <person name="Hauser H."/>
            <person name="Holroyd S."/>
            <person name="Jagels K."/>
            <person name="Leather S."/>
            <person name="Moule S."/>
            <person name="Norberczak H."/>
            <person name="O'Neil S."/>
            <person name="Ormond D."/>
            <person name="Price C."/>
            <person name="Rabbinowitsch E."/>
            <person name="Rutter S."/>
            <person name="Sanders M."/>
            <person name="Saunders D."/>
            <person name="Seeger K."/>
            <person name="Sharp S."/>
            <person name="Simmonds M."/>
            <person name="Skelton J."/>
            <person name="Squares R."/>
            <person name="Squares S."/>
            <person name="Stevens K."/>
            <person name="Unwin L."/>
            <person name="Whitehead S."/>
            <person name="Barrell B.G."/>
            <person name="Maskell D.J."/>
        </authorList>
    </citation>
    <scope>NUCLEOTIDE SEQUENCE [LARGE SCALE GENOMIC DNA]</scope>
    <source>
        <strain>ATCC BAA-588 / NCTC 13252 / RB50</strain>
    </source>
</reference>
<protein>
    <recommendedName>
        <fullName evidence="1">Chaperonin GroEL</fullName>
        <ecNumber evidence="1">5.6.1.7</ecNumber>
    </recommendedName>
    <alternativeName>
        <fullName evidence="1">60 kDa chaperonin</fullName>
    </alternativeName>
    <alternativeName>
        <fullName evidence="1">Chaperonin-60</fullName>
        <shortName evidence="1">Cpn60</shortName>
    </alternativeName>
</protein>
<comment type="function">
    <text evidence="1">Together with its co-chaperonin GroES, plays an essential role in assisting protein folding. The GroEL-GroES system forms a nano-cage that allows encapsulation of the non-native substrate proteins and provides a physical environment optimized to promote and accelerate protein folding.</text>
</comment>
<comment type="catalytic activity">
    <reaction evidence="1">
        <text>ATP + H2O + a folded polypeptide = ADP + phosphate + an unfolded polypeptide.</text>
        <dbReference type="EC" id="5.6.1.7"/>
    </reaction>
</comment>
<comment type="subunit">
    <text evidence="1">Forms a cylinder of 14 subunits composed of two heptameric rings stacked back-to-back. Interacts with the co-chaperonin GroES.</text>
</comment>
<comment type="subcellular location">
    <subcellularLocation>
        <location evidence="1">Cytoplasm</location>
    </subcellularLocation>
</comment>
<comment type="similarity">
    <text evidence="1">Belongs to the chaperonin (HSP60) family.</text>
</comment>
<dbReference type="EC" id="5.6.1.7" evidence="1"/>
<dbReference type="EMBL" id="BX640439">
    <property type="protein sequence ID" value="CAE31461.1"/>
    <property type="molecule type" value="Genomic_DNA"/>
</dbReference>
<dbReference type="RefSeq" id="WP_003808619.1">
    <property type="nucleotide sequence ID" value="NC_002927.3"/>
</dbReference>
<dbReference type="SMR" id="Q7WNS4"/>
<dbReference type="GeneID" id="93202618"/>
<dbReference type="KEGG" id="bbr:BB0962"/>
<dbReference type="eggNOG" id="COG0459">
    <property type="taxonomic scope" value="Bacteria"/>
</dbReference>
<dbReference type="HOGENOM" id="CLU_016503_3_0_4"/>
<dbReference type="Proteomes" id="UP000001027">
    <property type="component" value="Chromosome"/>
</dbReference>
<dbReference type="GO" id="GO:0005737">
    <property type="term" value="C:cytoplasm"/>
    <property type="evidence" value="ECO:0007669"/>
    <property type="project" value="UniProtKB-SubCell"/>
</dbReference>
<dbReference type="GO" id="GO:0005524">
    <property type="term" value="F:ATP binding"/>
    <property type="evidence" value="ECO:0007669"/>
    <property type="project" value="UniProtKB-UniRule"/>
</dbReference>
<dbReference type="GO" id="GO:0140662">
    <property type="term" value="F:ATP-dependent protein folding chaperone"/>
    <property type="evidence" value="ECO:0007669"/>
    <property type="project" value="InterPro"/>
</dbReference>
<dbReference type="GO" id="GO:0016853">
    <property type="term" value="F:isomerase activity"/>
    <property type="evidence" value="ECO:0007669"/>
    <property type="project" value="UniProtKB-KW"/>
</dbReference>
<dbReference type="GO" id="GO:0051082">
    <property type="term" value="F:unfolded protein binding"/>
    <property type="evidence" value="ECO:0007669"/>
    <property type="project" value="UniProtKB-UniRule"/>
</dbReference>
<dbReference type="GO" id="GO:0042026">
    <property type="term" value="P:protein refolding"/>
    <property type="evidence" value="ECO:0007669"/>
    <property type="project" value="UniProtKB-UniRule"/>
</dbReference>
<dbReference type="CDD" id="cd03344">
    <property type="entry name" value="GroEL"/>
    <property type="match status" value="1"/>
</dbReference>
<dbReference type="FunFam" id="1.10.560.10:FF:000001">
    <property type="entry name" value="60 kDa chaperonin"/>
    <property type="match status" value="1"/>
</dbReference>
<dbReference type="FunFam" id="3.50.7.10:FF:000001">
    <property type="entry name" value="60 kDa chaperonin"/>
    <property type="match status" value="1"/>
</dbReference>
<dbReference type="Gene3D" id="3.50.7.10">
    <property type="entry name" value="GroEL"/>
    <property type="match status" value="1"/>
</dbReference>
<dbReference type="Gene3D" id="1.10.560.10">
    <property type="entry name" value="GroEL-like equatorial domain"/>
    <property type="match status" value="1"/>
</dbReference>
<dbReference type="Gene3D" id="3.30.260.10">
    <property type="entry name" value="TCP-1-like chaperonin intermediate domain"/>
    <property type="match status" value="1"/>
</dbReference>
<dbReference type="HAMAP" id="MF_00600">
    <property type="entry name" value="CH60"/>
    <property type="match status" value="1"/>
</dbReference>
<dbReference type="InterPro" id="IPR018370">
    <property type="entry name" value="Chaperonin_Cpn60_CS"/>
</dbReference>
<dbReference type="InterPro" id="IPR001844">
    <property type="entry name" value="Cpn60/GroEL"/>
</dbReference>
<dbReference type="InterPro" id="IPR002423">
    <property type="entry name" value="Cpn60/GroEL/TCP-1"/>
</dbReference>
<dbReference type="InterPro" id="IPR027409">
    <property type="entry name" value="GroEL-like_apical_dom_sf"/>
</dbReference>
<dbReference type="InterPro" id="IPR027413">
    <property type="entry name" value="GROEL-like_equatorial_sf"/>
</dbReference>
<dbReference type="InterPro" id="IPR027410">
    <property type="entry name" value="TCP-1-like_intermed_sf"/>
</dbReference>
<dbReference type="NCBIfam" id="TIGR02348">
    <property type="entry name" value="GroEL"/>
    <property type="match status" value="1"/>
</dbReference>
<dbReference type="NCBIfam" id="NF000592">
    <property type="entry name" value="PRK00013.1"/>
    <property type="match status" value="1"/>
</dbReference>
<dbReference type="NCBIfam" id="NF009487">
    <property type="entry name" value="PRK12849.1"/>
    <property type="match status" value="1"/>
</dbReference>
<dbReference type="NCBIfam" id="NF009488">
    <property type="entry name" value="PRK12850.1"/>
    <property type="match status" value="1"/>
</dbReference>
<dbReference type="NCBIfam" id="NF009489">
    <property type="entry name" value="PRK12851.1"/>
    <property type="match status" value="1"/>
</dbReference>
<dbReference type="PANTHER" id="PTHR45633">
    <property type="entry name" value="60 KDA HEAT SHOCK PROTEIN, MITOCHONDRIAL"/>
    <property type="match status" value="1"/>
</dbReference>
<dbReference type="Pfam" id="PF00118">
    <property type="entry name" value="Cpn60_TCP1"/>
    <property type="match status" value="1"/>
</dbReference>
<dbReference type="PRINTS" id="PR00298">
    <property type="entry name" value="CHAPERONIN60"/>
</dbReference>
<dbReference type="SUPFAM" id="SSF52029">
    <property type="entry name" value="GroEL apical domain-like"/>
    <property type="match status" value="1"/>
</dbReference>
<dbReference type="SUPFAM" id="SSF48592">
    <property type="entry name" value="GroEL equatorial domain-like"/>
    <property type="match status" value="1"/>
</dbReference>
<dbReference type="SUPFAM" id="SSF54849">
    <property type="entry name" value="GroEL-intermediate domain like"/>
    <property type="match status" value="1"/>
</dbReference>
<dbReference type="PROSITE" id="PS00296">
    <property type="entry name" value="CHAPERONINS_CPN60"/>
    <property type="match status" value="1"/>
</dbReference>
<name>CH60_BORBR</name>
<accession>Q7WNS4</accession>